<comment type="function">
    <text evidence="1">Promotes RNA polymerase assembly. Latches the N- and C-terminal regions of the beta' subunit thereby facilitating its interaction with the beta and alpha subunits.</text>
</comment>
<comment type="catalytic activity">
    <reaction evidence="1">
        <text>RNA(n) + a ribonucleoside 5'-triphosphate = RNA(n+1) + diphosphate</text>
        <dbReference type="Rhea" id="RHEA:21248"/>
        <dbReference type="Rhea" id="RHEA-COMP:14527"/>
        <dbReference type="Rhea" id="RHEA-COMP:17342"/>
        <dbReference type="ChEBI" id="CHEBI:33019"/>
        <dbReference type="ChEBI" id="CHEBI:61557"/>
        <dbReference type="ChEBI" id="CHEBI:140395"/>
        <dbReference type="EC" id="2.7.7.6"/>
    </reaction>
</comment>
<comment type="subunit">
    <text evidence="1">The RNAP catalytic core consists of 2 alpha, 1 beta, 1 beta' and 1 omega subunit. When a sigma factor is associated with the core the holoenzyme is formed, which can initiate transcription.</text>
</comment>
<comment type="similarity">
    <text evidence="1">Belongs to the RNA polymerase subunit omega family.</text>
</comment>
<gene>
    <name evidence="1" type="primary">rpoZ</name>
    <name type="ordered locus">Dde_0247</name>
</gene>
<sequence length="73" mass="8232">MARITVEDCMERVSNRFLLVQMAIKRVKQFREGYEPLVPSKNKEIVTALREIAAAKVVPEDELSAAAAENRAE</sequence>
<reference key="1">
    <citation type="journal article" date="2011" name="J. Bacteriol.">
        <title>Complete genome sequence and updated annotation of Desulfovibrio alaskensis G20.</title>
        <authorList>
            <person name="Hauser L.J."/>
            <person name="Land M.L."/>
            <person name="Brown S.D."/>
            <person name="Larimer F."/>
            <person name="Keller K.L."/>
            <person name="Rapp-Giles B.J."/>
            <person name="Price M.N."/>
            <person name="Lin M."/>
            <person name="Bruce D.C."/>
            <person name="Detter J.C."/>
            <person name="Tapia R."/>
            <person name="Han C.S."/>
            <person name="Goodwin L.A."/>
            <person name="Cheng J.F."/>
            <person name="Pitluck S."/>
            <person name="Copeland A."/>
            <person name="Lucas S."/>
            <person name="Nolan M."/>
            <person name="Lapidus A.L."/>
            <person name="Palumbo A.V."/>
            <person name="Wall J.D."/>
        </authorList>
    </citation>
    <scope>NUCLEOTIDE SEQUENCE [LARGE SCALE GENOMIC DNA]</scope>
    <source>
        <strain>ATCC BAA-1058 / DSM 17464 / G20</strain>
    </source>
</reference>
<keyword id="KW-0240">DNA-directed RNA polymerase</keyword>
<keyword id="KW-0548">Nucleotidyltransferase</keyword>
<keyword id="KW-1185">Reference proteome</keyword>
<keyword id="KW-0804">Transcription</keyword>
<keyword id="KW-0808">Transferase</keyword>
<dbReference type="EC" id="2.7.7.6" evidence="1"/>
<dbReference type="EMBL" id="CP000112">
    <property type="protein sequence ID" value="ABB37048.1"/>
    <property type="molecule type" value="Genomic_DNA"/>
</dbReference>
<dbReference type="RefSeq" id="WP_011366396.1">
    <property type="nucleotide sequence ID" value="NC_007519.1"/>
</dbReference>
<dbReference type="SMR" id="Q316U8"/>
<dbReference type="STRING" id="207559.Dde_0247"/>
<dbReference type="KEGG" id="dde:Dde_0247"/>
<dbReference type="eggNOG" id="COG1758">
    <property type="taxonomic scope" value="Bacteria"/>
</dbReference>
<dbReference type="HOGENOM" id="CLU_125406_5_1_7"/>
<dbReference type="Proteomes" id="UP000002710">
    <property type="component" value="Chromosome"/>
</dbReference>
<dbReference type="GO" id="GO:0000428">
    <property type="term" value="C:DNA-directed RNA polymerase complex"/>
    <property type="evidence" value="ECO:0007669"/>
    <property type="project" value="UniProtKB-KW"/>
</dbReference>
<dbReference type="GO" id="GO:0003677">
    <property type="term" value="F:DNA binding"/>
    <property type="evidence" value="ECO:0007669"/>
    <property type="project" value="UniProtKB-UniRule"/>
</dbReference>
<dbReference type="GO" id="GO:0003899">
    <property type="term" value="F:DNA-directed RNA polymerase activity"/>
    <property type="evidence" value="ECO:0007669"/>
    <property type="project" value="UniProtKB-UniRule"/>
</dbReference>
<dbReference type="GO" id="GO:0006351">
    <property type="term" value="P:DNA-templated transcription"/>
    <property type="evidence" value="ECO:0007669"/>
    <property type="project" value="UniProtKB-UniRule"/>
</dbReference>
<dbReference type="Gene3D" id="3.90.940.10">
    <property type="match status" value="1"/>
</dbReference>
<dbReference type="HAMAP" id="MF_00366">
    <property type="entry name" value="RNApol_bact_RpoZ"/>
    <property type="match status" value="1"/>
</dbReference>
<dbReference type="InterPro" id="IPR003716">
    <property type="entry name" value="DNA-dir_RNA_pol_omega"/>
</dbReference>
<dbReference type="InterPro" id="IPR006110">
    <property type="entry name" value="Pol_omega/Rpo6/RPB6"/>
</dbReference>
<dbReference type="InterPro" id="IPR036161">
    <property type="entry name" value="RPB6/omega-like_sf"/>
</dbReference>
<dbReference type="NCBIfam" id="TIGR00690">
    <property type="entry name" value="rpoZ"/>
    <property type="match status" value="1"/>
</dbReference>
<dbReference type="PANTHER" id="PTHR34476">
    <property type="entry name" value="DNA-DIRECTED RNA POLYMERASE SUBUNIT OMEGA"/>
    <property type="match status" value="1"/>
</dbReference>
<dbReference type="PANTHER" id="PTHR34476:SF1">
    <property type="entry name" value="DNA-DIRECTED RNA POLYMERASE SUBUNIT OMEGA"/>
    <property type="match status" value="1"/>
</dbReference>
<dbReference type="Pfam" id="PF01192">
    <property type="entry name" value="RNA_pol_Rpb6"/>
    <property type="match status" value="1"/>
</dbReference>
<dbReference type="SMART" id="SM01409">
    <property type="entry name" value="RNA_pol_Rpb6"/>
    <property type="match status" value="1"/>
</dbReference>
<dbReference type="SUPFAM" id="SSF63562">
    <property type="entry name" value="RPB6/omega subunit-like"/>
    <property type="match status" value="1"/>
</dbReference>
<feature type="chain" id="PRO_0000237452" description="DNA-directed RNA polymerase subunit omega">
    <location>
        <begin position="1"/>
        <end position="73"/>
    </location>
</feature>
<name>RPOZ_OLEA2</name>
<organism>
    <name type="scientific">Oleidesulfovibrio alaskensis (strain ATCC BAA-1058 / DSM 17464 / G20)</name>
    <name type="common">Desulfovibrio alaskensis</name>
    <dbReference type="NCBI Taxonomy" id="207559"/>
    <lineage>
        <taxon>Bacteria</taxon>
        <taxon>Pseudomonadati</taxon>
        <taxon>Thermodesulfobacteriota</taxon>
        <taxon>Desulfovibrionia</taxon>
        <taxon>Desulfovibrionales</taxon>
        <taxon>Desulfovibrionaceae</taxon>
        <taxon>Oleidesulfovibrio</taxon>
    </lineage>
</organism>
<accession>Q316U8</accession>
<protein>
    <recommendedName>
        <fullName evidence="1">DNA-directed RNA polymerase subunit omega</fullName>
        <shortName evidence="1">RNAP omega subunit</shortName>
        <ecNumber evidence="1">2.7.7.6</ecNumber>
    </recommendedName>
    <alternativeName>
        <fullName evidence="1">RNA polymerase omega subunit</fullName>
    </alternativeName>
    <alternativeName>
        <fullName evidence="1">Transcriptase subunit omega</fullName>
    </alternativeName>
</protein>
<evidence type="ECO:0000255" key="1">
    <source>
        <dbReference type="HAMAP-Rule" id="MF_00366"/>
    </source>
</evidence>
<proteinExistence type="inferred from homology"/>